<feature type="chain" id="PRO_1000143885" description="Small ribosomal subunit protein uS14">
    <location>
        <begin position="1"/>
        <end position="61"/>
    </location>
</feature>
<feature type="binding site" evidence="1">
    <location>
        <position position="24"/>
    </location>
    <ligand>
        <name>Zn(2+)</name>
        <dbReference type="ChEBI" id="CHEBI:29105"/>
    </ligand>
</feature>
<feature type="binding site" evidence="1">
    <location>
        <position position="27"/>
    </location>
    <ligand>
        <name>Zn(2+)</name>
        <dbReference type="ChEBI" id="CHEBI:29105"/>
    </ligand>
</feature>
<feature type="binding site" evidence="1">
    <location>
        <position position="40"/>
    </location>
    <ligand>
        <name>Zn(2+)</name>
        <dbReference type="ChEBI" id="CHEBI:29105"/>
    </ligand>
</feature>
<feature type="binding site" evidence="1">
    <location>
        <position position="43"/>
    </location>
    <ligand>
        <name>Zn(2+)</name>
        <dbReference type="ChEBI" id="CHEBI:29105"/>
    </ligand>
</feature>
<accession>B3DQC7</accession>
<comment type="function">
    <text evidence="1">Binds 16S rRNA, required for the assembly of 30S particles and may also be responsible for determining the conformation of the 16S rRNA at the A site.</text>
</comment>
<comment type="cofactor">
    <cofactor evidence="1">
        <name>Zn(2+)</name>
        <dbReference type="ChEBI" id="CHEBI:29105"/>
    </cofactor>
    <text evidence="1">Binds 1 zinc ion per subunit.</text>
</comment>
<comment type="subunit">
    <text evidence="1">Part of the 30S ribosomal subunit. Contacts proteins S3 and S10.</text>
</comment>
<comment type="similarity">
    <text evidence="1">Belongs to the universal ribosomal protein uS14 family. Zinc-binding uS14 subfamily.</text>
</comment>
<protein>
    <recommendedName>
        <fullName evidence="1">Small ribosomal subunit protein uS14</fullName>
    </recommendedName>
    <alternativeName>
        <fullName evidence="2">30S ribosomal protein S14 type Z</fullName>
    </alternativeName>
</protein>
<sequence>MAKTALKNKAAGKPKFKVRAYTRCQVCGRPHSVYRKFGLCRICLREKAHRGELPGVTKSSW</sequence>
<gene>
    <name evidence="1" type="primary">rpsZ</name>
    <name evidence="1" type="synonym">rpsN</name>
    <name type="ordered locus">BLD_1720</name>
</gene>
<dbReference type="EMBL" id="CP000605">
    <property type="protein sequence ID" value="ACD99165.1"/>
    <property type="molecule type" value="Genomic_DNA"/>
</dbReference>
<dbReference type="RefSeq" id="WP_003814530.1">
    <property type="nucleotide sequence ID" value="NZ_AABM02000025.1"/>
</dbReference>
<dbReference type="SMR" id="B3DQC7"/>
<dbReference type="KEGG" id="blj:BLD_1720"/>
<dbReference type="HOGENOM" id="CLU_139869_3_0_11"/>
<dbReference type="Proteomes" id="UP000002419">
    <property type="component" value="Chromosome"/>
</dbReference>
<dbReference type="GO" id="GO:0005737">
    <property type="term" value="C:cytoplasm"/>
    <property type="evidence" value="ECO:0007669"/>
    <property type="project" value="UniProtKB-ARBA"/>
</dbReference>
<dbReference type="GO" id="GO:0015935">
    <property type="term" value="C:small ribosomal subunit"/>
    <property type="evidence" value="ECO:0007669"/>
    <property type="project" value="TreeGrafter"/>
</dbReference>
<dbReference type="GO" id="GO:0019843">
    <property type="term" value="F:rRNA binding"/>
    <property type="evidence" value="ECO:0007669"/>
    <property type="project" value="UniProtKB-UniRule"/>
</dbReference>
<dbReference type="GO" id="GO:0003735">
    <property type="term" value="F:structural constituent of ribosome"/>
    <property type="evidence" value="ECO:0007669"/>
    <property type="project" value="InterPro"/>
</dbReference>
<dbReference type="GO" id="GO:0008270">
    <property type="term" value="F:zinc ion binding"/>
    <property type="evidence" value="ECO:0007669"/>
    <property type="project" value="UniProtKB-UniRule"/>
</dbReference>
<dbReference type="GO" id="GO:0006412">
    <property type="term" value="P:translation"/>
    <property type="evidence" value="ECO:0007669"/>
    <property type="project" value="UniProtKB-UniRule"/>
</dbReference>
<dbReference type="FunFam" id="4.10.830.10:FF:000001">
    <property type="entry name" value="30S ribosomal protein S14 type Z"/>
    <property type="match status" value="1"/>
</dbReference>
<dbReference type="Gene3D" id="4.10.830.10">
    <property type="entry name" value="30s Ribosomal Protein S14, Chain N"/>
    <property type="match status" value="1"/>
</dbReference>
<dbReference type="HAMAP" id="MF_01364_B">
    <property type="entry name" value="Ribosomal_uS14_2_B"/>
    <property type="match status" value="1"/>
</dbReference>
<dbReference type="InterPro" id="IPR001209">
    <property type="entry name" value="Ribosomal_uS14"/>
</dbReference>
<dbReference type="InterPro" id="IPR023053">
    <property type="entry name" value="Ribosomal_uS14_bact"/>
</dbReference>
<dbReference type="InterPro" id="IPR018271">
    <property type="entry name" value="Ribosomal_uS14_CS"/>
</dbReference>
<dbReference type="InterPro" id="IPR043140">
    <property type="entry name" value="Ribosomal_uS14_sf"/>
</dbReference>
<dbReference type="NCBIfam" id="NF005974">
    <property type="entry name" value="PRK08061.1"/>
    <property type="match status" value="1"/>
</dbReference>
<dbReference type="PANTHER" id="PTHR19836">
    <property type="entry name" value="30S RIBOSOMAL PROTEIN S14"/>
    <property type="match status" value="1"/>
</dbReference>
<dbReference type="PANTHER" id="PTHR19836:SF19">
    <property type="entry name" value="SMALL RIBOSOMAL SUBUNIT PROTEIN US14M"/>
    <property type="match status" value="1"/>
</dbReference>
<dbReference type="Pfam" id="PF00253">
    <property type="entry name" value="Ribosomal_S14"/>
    <property type="match status" value="1"/>
</dbReference>
<dbReference type="SUPFAM" id="SSF57716">
    <property type="entry name" value="Glucocorticoid receptor-like (DNA-binding domain)"/>
    <property type="match status" value="1"/>
</dbReference>
<dbReference type="PROSITE" id="PS00527">
    <property type="entry name" value="RIBOSOMAL_S14"/>
    <property type="match status" value="1"/>
</dbReference>
<name>RS14Z_BIFLD</name>
<keyword id="KW-0479">Metal-binding</keyword>
<keyword id="KW-0687">Ribonucleoprotein</keyword>
<keyword id="KW-0689">Ribosomal protein</keyword>
<keyword id="KW-0694">RNA-binding</keyword>
<keyword id="KW-0699">rRNA-binding</keyword>
<keyword id="KW-0862">Zinc</keyword>
<organism>
    <name type="scientific">Bifidobacterium longum (strain DJO10A)</name>
    <dbReference type="NCBI Taxonomy" id="205913"/>
    <lineage>
        <taxon>Bacteria</taxon>
        <taxon>Bacillati</taxon>
        <taxon>Actinomycetota</taxon>
        <taxon>Actinomycetes</taxon>
        <taxon>Bifidobacteriales</taxon>
        <taxon>Bifidobacteriaceae</taxon>
        <taxon>Bifidobacterium</taxon>
    </lineage>
</organism>
<proteinExistence type="inferred from homology"/>
<reference key="1">
    <citation type="journal article" date="2008" name="BMC Genomics">
        <title>Comparative genomic analysis of the gut bacterium Bifidobacterium longum reveals loci susceptible to deletion during pure culture growth.</title>
        <authorList>
            <person name="Lee J.H."/>
            <person name="Karamychev V.N."/>
            <person name="Kozyavkin S.A."/>
            <person name="Mills D."/>
            <person name="Pavlov A.R."/>
            <person name="Pavlova N.V."/>
            <person name="Polouchine N.N."/>
            <person name="Richardson P.M."/>
            <person name="Shakhova V.V."/>
            <person name="Slesarev A.I."/>
            <person name="Weimer B."/>
            <person name="O'Sullivan D.J."/>
        </authorList>
    </citation>
    <scope>NUCLEOTIDE SEQUENCE [LARGE SCALE GENOMIC DNA]</scope>
    <source>
        <strain>DJO10A</strain>
    </source>
</reference>
<evidence type="ECO:0000255" key="1">
    <source>
        <dbReference type="HAMAP-Rule" id="MF_01364"/>
    </source>
</evidence>
<evidence type="ECO:0000305" key="2"/>